<sequence>MNVIEGNLVGTGLKIGIVVSRFNEFITSKLLSGAIDGLTRHGVSDNDITVTWVPGAFEIPLVAKKMAESKQFDAIITLGAVIRGATSHFDYVCSEAAKGVSHAALTSGVPVIFGVLTTDTIEQAIERAGTKAGNKGWEAAVSAIEMANVLRGLA</sequence>
<gene>
    <name evidence="1" type="primary">ribH</name>
    <name type="ordered locus">GTNG_2222</name>
</gene>
<evidence type="ECO:0000255" key="1">
    <source>
        <dbReference type="HAMAP-Rule" id="MF_00178"/>
    </source>
</evidence>
<feature type="chain" id="PRO_1000040425" description="6,7-dimethyl-8-ribityllumazine synthase">
    <location>
        <begin position="1"/>
        <end position="154"/>
    </location>
</feature>
<feature type="active site" description="Proton donor" evidence="1">
    <location>
        <position position="88"/>
    </location>
</feature>
<feature type="binding site" evidence="1">
    <location>
        <position position="22"/>
    </location>
    <ligand>
        <name>5-amino-6-(D-ribitylamino)uracil</name>
        <dbReference type="ChEBI" id="CHEBI:15934"/>
    </ligand>
</feature>
<feature type="binding site" evidence="1">
    <location>
        <begin position="56"/>
        <end position="58"/>
    </location>
    <ligand>
        <name>5-amino-6-(D-ribitylamino)uracil</name>
        <dbReference type="ChEBI" id="CHEBI:15934"/>
    </ligand>
</feature>
<feature type="binding site" evidence="1">
    <location>
        <begin position="80"/>
        <end position="82"/>
    </location>
    <ligand>
        <name>5-amino-6-(D-ribitylamino)uracil</name>
        <dbReference type="ChEBI" id="CHEBI:15934"/>
    </ligand>
</feature>
<feature type="binding site" evidence="1">
    <location>
        <begin position="85"/>
        <end position="86"/>
    </location>
    <ligand>
        <name>(2S)-2-hydroxy-3-oxobutyl phosphate</name>
        <dbReference type="ChEBI" id="CHEBI:58830"/>
    </ligand>
</feature>
<feature type="binding site" evidence="1">
    <location>
        <position position="113"/>
    </location>
    <ligand>
        <name>5-amino-6-(D-ribitylamino)uracil</name>
        <dbReference type="ChEBI" id="CHEBI:15934"/>
    </ligand>
</feature>
<feature type="binding site" evidence="1">
    <location>
        <position position="127"/>
    </location>
    <ligand>
        <name>(2S)-2-hydroxy-3-oxobutyl phosphate</name>
        <dbReference type="ChEBI" id="CHEBI:58830"/>
    </ligand>
</feature>
<dbReference type="EC" id="2.5.1.78" evidence="1"/>
<dbReference type="EMBL" id="CP000557">
    <property type="protein sequence ID" value="ABO67571.1"/>
    <property type="molecule type" value="Genomic_DNA"/>
</dbReference>
<dbReference type="RefSeq" id="WP_011887731.1">
    <property type="nucleotide sequence ID" value="NC_009328.1"/>
</dbReference>
<dbReference type="SMR" id="A4IQG7"/>
<dbReference type="GeneID" id="87623675"/>
<dbReference type="KEGG" id="gtn:GTNG_2222"/>
<dbReference type="eggNOG" id="COG0054">
    <property type="taxonomic scope" value="Bacteria"/>
</dbReference>
<dbReference type="HOGENOM" id="CLU_089358_1_1_9"/>
<dbReference type="UniPathway" id="UPA00275">
    <property type="reaction ID" value="UER00404"/>
</dbReference>
<dbReference type="Proteomes" id="UP000001578">
    <property type="component" value="Chromosome"/>
</dbReference>
<dbReference type="GO" id="GO:0005829">
    <property type="term" value="C:cytosol"/>
    <property type="evidence" value="ECO:0007669"/>
    <property type="project" value="TreeGrafter"/>
</dbReference>
<dbReference type="GO" id="GO:0009349">
    <property type="term" value="C:riboflavin synthase complex"/>
    <property type="evidence" value="ECO:0007669"/>
    <property type="project" value="InterPro"/>
</dbReference>
<dbReference type="GO" id="GO:0000906">
    <property type="term" value="F:6,7-dimethyl-8-ribityllumazine synthase activity"/>
    <property type="evidence" value="ECO:0007669"/>
    <property type="project" value="UniProtKB-UniRule"/>
</dbReference>
<dbReference type="GO" id="GO:0009231">
    <property type="term" value="P:riboflavin biosynthetic process"/>
    <property type="evidence" value="ECO:0007669"/>
    <property type="project" value="UniProtKB-UniRule"/>
</dbReference>
<dbReference type="CDD" id="cd09209">
    <property type="entry name" value="Lumazine_synthase-I"/>
    <property type="match status" value="1"/>
</dbReference>
<dbReference type="FunFam" id="3.40.50.960:FF:000001">
    <property type="entry name" value="6,7-dimethyl-8-ribityllumazine synthase"/>
    <property type="match status" value="1"/>
</dbReference>
<dbReference type="Gene3D" id="3.40.50.960">
    <property type="entry name" value="Lumazine/riboflavin synthase"/>
    <property type="match status" value="1"/>
</dbReference>
<dbReference type="HAMAP" id="MF_00178">
    <property type="entry name" value="Lumazine_synth"/>
    <property type="match status" value="1"/>
</dbReference>
<dbReference type="InterPro" id="IPR034964">
    <property type="entry name" value="LS"/>
</dbReference>
<dbReference type="InterPro" id="IPR002180">
    <property type="entry name" value="LS/RS"/>
</dbReference>
<dbReference type="InterPro" id="IPR036467">
    <property type="entry name" value="LS/RS_sf"/>
</dbReference>
<dbReference type="NCBIfam" id="TIGR00114">
    <property type="entry name" value="lumazine-synth"/>
    <property type="match status" value="1"/>
</dbReference>
<dbReference type="NCBIfam" id="NF000812">
    <property type="entry name" value="PRK00061.1-4"/>
    <property type="match status" value="1"/>
</dbReference>
<dbReference type="PANTHER" id="PTHR21058:SF0">
    <property type="entry name" value="6,7-DIMETHYL-8-RIBITYLLUMAZINE SYNTHASE"/>
    <property type="match status" value="1"/>
</dbReference>
<dbReference type="PANTHER" id="PTHR21058">
    <property type="entry name" value="6,7-DIMETHYL-8-RIBITYLLUMAZINE SYNTHASE DMRL SYNTHASE LUMAZINE SYNTHASE"/>
    <property type="match status" value="1"/>
</dbReference>
<dbReference type="Pfam" id="PF00885">
    <property type="entry name" value="DMRL_synthase"/>
    <property type="match status" value="1"/>
</dbReference>
<dbReference type="SUPFAM" id="SSF52121">
    <property type="entry name" value="Lumazine synthase"/>
    <property type="match status" value="1"/>
</dbReference>
<comment type="function">
    <text evidence="1">Catalyzes the formation of 6,7-dimethyl-8-ribityllumazine by condensation of 5-amino-6-(D-ribitylamino)uracil with 3,4-dihydroxy-2-butanone 4-phosphate. This is the penultimate step in the biosynthesis of riboflavin.</text>
</comment>
<comment type="catalytic activity">
    <reaction evidence="1">
        <text>(2S)-2-hydroxy-3-oxobutyl phosphate + 5-amino-6-(D-ribitylamino)uracil = 6,7-dimethyl-8-(1-D-ribityl)lumazine + phosphate + 2 H2O + H(+)</text>
        <dbReference type="Rhea" id="RHEA:26152"/>
        <dbReference type="ChEBI" id="CHEBI:15377"/>
        <dbReference type="ChEBI" id="CHEBI:15378"/>
        <dbReference type="ChEBI" id="CHEBI:15934"/>
        <dbReference type="ChEBI" id="CHEBI:43474"/>
        <dbReference type="ChEBI" id="CHEBI:58201"/>
        <dbReference type="ChEBI" id="CHEBI:58830"/>
        <dbReference type="EC" id="2.5.1.78"/>
    </reaction>
</comment>
<comment type="pathway">
    <text evidence="1">Cofactor biosynthesis; riboflavin biosynthesis; riboflavin from 2-hydroxy-3-oxobutyl phosphate and 5-amino-6-(D-ribitylamino)uracil: step 1/2.</text>
</comment>
<comment type="subunit">
    <text evidence="1">Forms an icosahedral capsid composed of 60 subunits, arranged as a dodecamer of pentamers.</text>
</comment>
<comment type="similarity">
    <text evidence="1">Belongs to the DMRL synthase family.</text>
</comment>
<organism>
    <name type="scientific">Geobacillus thermodenitrificans (strain NG80-2)</name>
    <dbReference type="NCBI Taxonomy" id="420246"/>
    <lineage>
        <taxon>Bacteria</taxon>
        <taxon>Bacillati</taxon>
        <taxon>Bacillota</taxon>
        <taxon>Bacilli</taxon>
        <taxon>Bacillales</taxon>
        <taxon>Anoxybacillaceae</taxon>
        <taxon>Geobacillus</taxon>
    </lineage>
</organism>
<keyword id="KW-0686">Riboflavin biosynthesis</keyword>
<keyword id="KW-0808">Transferase</keyword>
<accession>A4IQG7</accession>
<name>RISB_GEOTN</name>
<reference key="1">
    <citation type="journal article" date="2007" name="Proc. Natl. Acad. Sci. U.S.A.">
        <title>Genome and proteome of long-chain alkane degrading Geobacillus thermodenitrificans NG80-2 isolated from a deep-subsurface oil reservoir.</title>
        <authorList>
            <person name="Feng L."/>
            <person name="Wang W."/>
            <person name="Cheng J."/>
            <person name="Ren Y."/>
            <person name="Zhao G."/>
            <person name="Gao C."/>
            <person name="Tang Y."/>
            <person name="Liu X."/>
            <person name="Han W."/>
            <person name="Peng X."/>
            <person name="Liu R."/>
            <person name="Wang L."/>
        </authorList>
    </citation>
    <scope>NUCLEOTIDE SEQUENCE [LARGE SCALE GENOMIC DNA]</scope>
    <source>
        <strain>NG80-2</strain>
    </source>
</reference>
<protein>
    <recommendedName>
        <fullName evidence="1">6,7-dimethyl-8-ribityllumazine synthase</fullName>
        <shortName evidence="1">DMRL synthase</shortName>
        <shortName evidence="1">LS</shortName>
        <shortName evidence="1">Lumazine synthase</shortName>
        <ecNumber evidence="1">2.5.1.78</ecNumber>
    </recommendedName>
</protein>
<proteinExistence type="inferred from homology"/>